<comment type="similarity">
    <text evidence="1">Belongs to the phage portal family. HK97 subfamily.</text>
</comment>
<comment type="caution">
    <text evidence="1">Could be the product of a pseudogene. It is homologous to the N-terminus of two uncharacterized proteins (RF_0471 of R.felis and RBE_0759 of R.bellii).</text>
</comment>
<name>Y396_RICCN</name>
<dbReference type="EMBL" id="AE006914">
    <property type="protein sequence ID" value="AAL02934.1"/>
    <property type="molecule type" value="Genomic_DNA"/>
</dbReference>
<dbReference type="PIR" id="D97749">
    <property type="entry name" value="D97749"/>
</dbReference>
<dbReference type="RefSeq" id="WP_010977050.1">
    <property type="nucleotide sequence ID" value="NC_003103.1"/>
</dbReference>
<dbReference type="GeneID" id="69247887"/>
<dbReference type="KEGG" id="rco:RC0396"/>
<dbReference type="PATRIC" id="fig|272944.4.peg.450"/>
<dbReference type="HOGENOM" id="CLU_2384286_0_0_5"/>
<dbReference type="Proteomes" id="UP000000816">
    <property type="component" value="Chromosome"/>
</dbReference>
<organism>
    <name type="scientific">Rickettsia conorii (strain ATCC VR-613 / Malish 7)</name>
    <dbReference type="NCBI Taxonomy" id="272944"/>
    <lineage>
        <taxon>Bacteria</taxon>
        <taxon>Pseudomonadati</taxon>
        <taxon>Pseudomonadota</taxon>
        <taxon>Alphaproteobacteria</taxon>
        <taxon>Rickettsiales</taxon>
        <taxon>Rickettsiaceae</taxon>
        <taxon>Rickettsieae</taxon>
        <taxon>Rickettsia</taxon>
        <taxon>spotted fever group</taxon>
    </lineage>
</organism>
<gene>
    <name type="ordered locus">RC0396</name>
</gene>
<protein>
    <recommendedName>
        <fullName>Putative uncharacterized protein RC0396</fullName>
    </recommendedName>
</protein>
<evidence type="ECO:0000305" key="1"/>
<reference key="1">
    <citation type="journal article" date="2001" name="Science">
        <title>Mechanisms of evolution in Rickettsia conorii and R. prowazekii.</title>
        <authorList>
            <person name="Ogata H."/>
            <person name="Audic S."/>
            <person name="Renesto-Audiffren P."/>
            <person name="Fournier P.-E."/>
            <person name="Barbe V."/>
            <person name="Samson D."/>
            <person name="Roux V."/>
            <person name="Cossart P."/>
            <person name="Weissenbach J."/>
            <person name="Claverie J.-M."/>
            <person name="Raoult D."/>
        </authorList>
    </citation>
    <scope>NUCLEOTIDE SEQUENCE [LARGE SCALE GENOMIC DNA]</scope>
    <source>
        <strain>ATCC VR-613 / Malish 7</strain>
    </source>
</reference>
<sequence length="94" mass="10878">MIKNYRKKFWKNSTTKSQNFIELNDIAYGNLIRVDIEAYRENVIVYRCINLIAQSAGHVPWKVLKSKTGEVIFRLSGALFTNKTESQKSRSGFC</sequence>
<proteinExistence type="uncertain"/>
<accession>Q92IM4</accession>
<feature type="chain" id="PRO_0000280988" description="Putative uncharacterized protein RC0396">
    <location>
        <begin position="1"/>
        <end position="94"/>
    </location>
</feature>